<proteinExistence type="inferred from homology"/>
<organism>
    <name type="scientific">Aspergillus clavatus (strain ATCC 1007 / CBS 513.65 / DSM 816 / NCTC 3887 / NRRL 1 / QM 1276 / 107)</name>
    <dbReference type="NCBI Taxonomy" id="344612"/>
    <lineage>
        <taxon>Eukaryota</taxon>
        <taxon>Fungi</taxon>
        <taxon>Dikarya</taxon>
        <taxon>Ascomycota</taxon>
        <taxon>Pezizomycotina</taxon>
        <taxon>Eurotiomycetes</taxon>
        <taxon>Eurotiomycetidae</taxon>
        <taxon>Eurotiales</taxon>
        <taxon>Aspergillaceae</taxon>
        <taxon>Aspergillus</taxon>
        <taxon>Aspergillus subgen. Fumigati</taxon>
    </lineage>
</organism>
<keyword id="KW-0539">Nucleus</keyword>
<keyword id="KW-1185">Reference proteome</keyword>
<keyword id="KW-0677">Repeat</keyword>
<keyword id="KW-0690">Ribosome biogenesis</keyword>
<keyword id="KW-0698">rRNA processing</keyword>
<keyword id="KW-0853">WD repeat</keyword>
<feature type="chain" id="PRO_0000370416" description="Ribosome biogenesis protein erb1">
    <location>
        <begin position="1"/>
        <end position="788"/>
    </location>
</feature>
<feature type="repeat" description="WD 1">
    <location>
        <begin position="426"/>
        <end position="465"/>
    </location>
</feature>
<feature type="repeat" description="WD 2">
    <location>
        <begin position="469"/>
        <end position="509"/>
    </location>
</feature>
<feature type="repeat" description="WD 3">
    <location>
        <begin position="611"/>
        <end position="649"/>
    </location>
</feature>
<feature type="repeat" description="WD 4">
    <location>
        <begin position="652"/>
        <end position="697"/>
    </location>
</feature>
<feature type="repeat" description="WD 5">
    <location>
        <begin position="701"/>
        <end position="742"/>
    </location>
</feature>
<feature type="repeat" description="WD 6">
    <location>
        <begin position="758"/>
        <end position="788"/>
    </location>
</feature>
<feature type="region of interest" description="Disordered" evidence="2">
    <location>
        <begin position="1"/>
        <end position="118"/>
    </location>
</feature>
<feature type="region of interest" description="Disordered" evidence="2">
    <location>
        <begin position="321"/>
        <end position="344"/>
    </location>
</feature>
<feature type="compositionally biased region" description="Basic residues" evidence="2">
    <location>
        <begin position="1"/>
        <end position="12"/>
    </location>
</feature>
<feature type="compositionally biased region" description="Acidic residues" evidence="2">
    <location>
        <begin position="46"/>
        <end position="82"/>
    </location>
</feature>
<feature type="compositionally biased region" description="Acidic residues" evidence="2">
    <location>
        <begin position="99"/>
        <end position="112"/>
    </location>
</feature>
<feature type="compositionally biased region" description="Pro residues" evidence="2">
    <location>
        <begin position="321"/>
        <end position="335"/>
    </location>
</feature>
<gene>
    <name type="primary">erb1</name>
    <name type="ORF">ACLA_026270</name>
</gene>
<protein>
    <recommendedName>
        <fullName evidence="1">Ribosome biogenesis protein erb1</fullName>
    </recommendedName>
    <alternativeName>
        <fullName evidence="1">Eukaryotic ribosome biogenesis protein 1</fullName>
    </alternativeName>
</protein>
<evidence type="ECO:0000255" key="1">
    <source>
        <dbReference type="HAMAP-Rule" id="MF_03027"/>
    </source>
</evidence>
<evidence type="ECO:0000256" key="2">
    <source>
        <dbReference type="SAM" id="MobiDB-lite"/>
    </source>
</evidence>
<reference key="1">
    <citation type="journal article" date="2008" name="PLoS Genet.">
        <title>Genomic islands in the pathogenic filamentous fungus Aspergillus fumigatus.</title>
        <authorList>
            <person name="Fedorova N.D."/>
            <person name="Khaldi N."/>
            <person name="Joardar V.S."/>
            <person name="Maiti R."/>
            <person name="Amedeo P."/>
            <person name="Anderson M.J."/>
            <person name="Crabtree J."/>
            <person name="Silva J.C."/>
            <person name="Badger J.H."/>
            <person name="Albarraq A."/>
            <person name="Angiuoli S."/>
            <person name="Bussey H."/>
            <person name="Bowyer P."/>
            <person name="Cotty P.J."/>
            <person name="Dyer P.S."/>
            <person name="Egan A."/>
            <person name="Galens K."/>
            <person name="Fraser-Liggett C.M."/>
            <person name="Haas B.J."/>
            <person name="Inman J.M."/>
            <person name="Kent R."/>
            <person name="Lemieux S."/>
            <person name="Malavazi I."/>
            <person name="Orvis J."/>
            <person name="Roemer T."/>
            <person name="Ronning C.M."/>
            <person name="Sundaram J.P."/>
            <person name="Sutton G."/>
            <person name="Turner G."/>
            <person name="Venter J.C."/>
            <person name="White O.R."/>
            <person name="Whitty B.R."/>
            <person name="Youngman P."/>
            <person name="Wolfe K.H."/>
            <person name="Goldman G.H."/>
            <person name="Wortman J.R."/>
            <person name="Jiang B."/>
            <person name="Denning D.W."/>
            <person name="Nierman W.C."/>
        </authorList>
    </citation>
    <scope>NUCLEOTIDE SEQUENCE [LARGE SCALE GENOMIC DNA]</scope>
    <source>
        <strain>ATCC 1007 / CBS 513.65 / DSM 816 / NCTC 3887 / NRRL 1 / QM 1276 / 107</strain>
    </source>
</reference>
<dbReference type="EMBL" id="DS027059">
    <property type="protein sequence ID" value="EAW07910.1"/>
    <property type="molecule type" value="Genomic_DNA"/>
</dbReference>
<dbReference type="RefSeq" id="XP_001269336.1">
    <property type="nucleotide sequence ID" value="XM_001269335.1"/>
</dbReference>
<dbReference type="SMR" id="A1CQI9"/>
<dbReference type="STRING" id="344612.A1CQI9"/>
<dbReference type="EnsemblFungi" id="EAW07910">
    <property type="protein sequence ID" value="EAW07910"/>
    <property type="gene ID" value="ACLA_026270"/>
</dbReference>
<dbReference type="GeneID" id="4701900"/>
<dbReference type="KEGG" id="act:ACLA_026270"/>
<dbReference type="VEuPathDB" id="FungiDB:ACLA_026270"/>
<dbReference type="eggNOG" id="KOG0650">
    <property type="taxonomic scope" value="Eukaryota"/>
</dbReference>
<dbReference type="HOGENOM" id="CLU_011390_0_1_1"/>
<dbReference type="OMA" id="MRPAKGE"/>
<dbReference type="OrthoDB" id="5571054at2759"/>
<dbReference type="Proteomes" id="UP000006701">
    <property type="component" value="Unassembled WGS sequence"/>
</dbReference>
<dbReference type="GO" id="GO:0005654">
    <property type="term" value="C:nucleoplasm"/>
    <property type="evidence" value="ECO:0007669"/>
    <property type="project" value="UniProtKB-SubCell"/>
</dbReference>
<dbReference type="GO" id="GO:0070545">
    <property type="term" value="C:PeBoW complex"/>
    <property type="evidence" value="ECO:0007669"/>
    <property type="project" value="EnsemblFungi"/>
</dbReference>
<dbReference type="GO" id="GO:0030687">
    <property type="term" value="C:preribosome, large subunit precursor"/>
    <property type="evidence" value="ECO:0007669"/>
    <property type="project" value="UniProtKB-UniRule"/>
</dbReference>
<dbReference type="GO" id="GO:0070180">
    <property type="term" value="F:large ribosomal subunit rRNA binding"/>
    <property type="evidence" value="ECO:0007669"/>
    <property type="project" value="EnsemblFungi"/>
</dbReference>
<dbReference type="GO" id="GO:0043021">
    <property type="term" value="F:ribonucleoprotein complex binding"/>
    <property type="evidence" value="ECO:0007669"/>
    <property type="project" value="UniProtKB-UniRule"/>
</dbReference>
<dbReference type="GO" id="GO:0000466">
    <property type="term" value="P:maturation of 5.8S rRNA from tricistronic rRNA transcript (SSU-rRNA, 5.8S rRNA, LSU-rRNA)"/>
    <property type="evidence" value="ECO:0007669"/>
    <property type="project" value="UniProtKB-UniRule"/>
</dbReference>
<dbReference type="GO" id="GO:0000463">
    <property type="term" value="P:maturation of LSU-rRNA from tricistronic rRNA transcript (SSU-rRNA, 5.8S rRNA, LSU-rRNA)"/>
    <property type="evidence" value="ECO:0007669"/>
    <property type="project" value="UniProtKB-UniRule"/>
</dbReference>
<dbReference type="FunFam" id="2.130.10.10:FF:000061">
    <property type="entry name" value="Ribosome biogenesis protein BOP1 homolog"/>
    <property type="match status" value="1"/>
</dbReference>
<dbReference type="Gene3D" id="2.130.10.10">
    <property type="entry name" value="YVTN repeat-like/Quinoprotein amine dehydrogenase"/>
    <property type="match status" value="1"/>
</dbReference>
<dbReference type="HAMAP" id="MF_03027">
    <property type="entry name" value="BOP1"/>
    <property type="match status" value="1"/>
</dbReference>
<dbReference type="InterPro" id="IPR028598">
    <property type="entry name" value="BOP1/Erb1"/>
</dbReference>
<dbReference type="InterPro" id="IPR012953">
    <property type="entry name" value="BOP1_N_dom"/>
</dbReference>
<dbReference type="InterPro" id="IPR015943">
    <property type="entry name" value="WD40/YVTN_repeat-like_dom_sf"/>
</dbReference>
<dbReference type="InterPro" id="IPR019775">
    <property type="entry name" value="WD40_repeat_CS"/>
</dbReference>
<dbReference type="InterPro" id="IPR036322">
    <property type="entry name" value="WD40_repeat_dom_sf"/>
</dbReference>
<dbReference type="InterPro" id="IPR001680">
    <property type="entry name" value="WD40_rpt"/>
</dbReference>
<dbReference type="PANTHER" id="PTHR17605:SF0">
    <property type="entry name" value="RIBOSOME BIOGENESIS PROTEIN BOP1"/>
    <property type="match status" value="1"/>
</dbReference>
<dbReference type="PANTHER" id="PTHR17605">
    <property type="entry name" value="RIBOSOME BIOGENESIS PROTEIN BOP1 BLOCK OF PROLIFERATION 1 PROTEIN"/>
    <property type="match status" value="1"/>
</dbReference>
<dbReference type="Pfam" id="PF08145">
    <property type="entry name" value="BOP1NT"/>
    <property type="match status" value="1"/>
</dbReference>
<dbReference type="Pfam" id="PF00400">
    <property type="entry name" value="WD40"/>
    <property type="match status" value="3"/>
</dbReference>
<dbReference type="SMART" id="SM01035">
    <property type="entry name" value="BOP1NT"/>
    <property type="match status" value="1"/>
</dbReference>
<dbReference type="SMART" id="SM00320">
    <property type="entry name" value="WD40"/>
    <property type="match status" value="4"/>
</dbReference>
<dbReference type="SUPFAM" id="SSF50978">
    <property type="entry name" value="WD40 repeat-like"/>
    <property type="match status" value="1"/>
</dbReference>
<dbReference type="PROSITE" id="PS00678">
    <property type="entry name" value="WD_REPEATS_1"/>
    <property type="match status" value="1"/>
</dbReference>
<dbReference type="PROSITE" id="PS50082">
    <property type="entry name" value="WD_REPEATS_2"/>
    <property type="match status" value="2"/>
</dbReference>
<dbReference type="PROSITE" id="PS50294">
    <property type="entry name" value="WD_REPEATS_REGION"/>
    <property type="match status" value="1"/>
</dbReference>
<sequence>MNASKASKKRKAVTRDVEEEAGVFSGDELNADNLDGALSDNANDLSSDEDDSDSEIELVDEFSEDDEDDEELDSDEIPSDGEDAVKKKSVTTTDKSGEIAEDAESSSEEEELDFRIEKDANGNDRFIYDEINPDDNSEYSDVEENSNTIGDIPLSFYDQYPHIGYDINGKKILRPAKGEALDALLDSIEIPKGWTGLTDPSTGKPLELSQDELELLRKVQMNEIPEEGYNPYEPTVEWFTSQQEIMPLSAAPEPKRRFVPSKHEAKRVMKIVKAIREGRILPFKPPTEEDKEEDNVINYDLWADEAERPDHIMHIPAPKLPPPGYEESYHPPPEYLPDKKERKAWEEADPEDREQEFLPNDFGSLRRVPGYENFVKEKFERCLDLYLAPRVRRSKLNIDPESLLPKLPSPEELKPFPTACATVFRGHKGRVRSLAVDPSGLWLATAGDDGTVRVWELLTGRQLWSVKLSEEDPVNVVRWRPGKDALILAAAAGDDIYLAVPPIVDPEVEKASLDILDAGWGHAASVPALTPAEANKKNNPPKWIRPSSSLQESGVCAIIPLRYIAKSLSWHRRGDYFVTVCPGSSTPASVAIAIHTLSKHLTQYPFRRRIKGGGSPQAAHFHPSKPILFVANQRSIRAYDLSRQLLVKILQPGARWISSFDIHPTSSTASGGDNLIVGSYDRRLLWHDLELSQRPYKTLRYHRKAIRAVKFHPGGRYPLFADASDDGSLQIFHGSVTGDMLSNATIVPLKVLKGHKITGELGVLDIDWHPREPWCVSAGADGTCRLWM</sequence>
<accession>A1CQI9</accession>
<comment type="function">
    <text evidence="1">Component of the NOP7 complex, which is required for maturation of the 25S and 5.8S ribosomal RNAs and formation of the 60S ribosome.</text>
</comment>
<comment type="subunit">
    <text evidence="1">Component of the NOP7 complex, composed of erb1, nop7 and ytm1. The complex is held together by erb1, which interacts with nop7 via its N-terminal domain and with ytm1 via a high-affinity interaction between the seven-bladed beta-propeller domains of the 2 proteins. The NOP7 complex associates with the 66S pre-ribosome.</text>
</comment>
<comment type="subcellular location">
    <subcellularLocation>
        <location evidence="1">Nucleus</location>
        <location evidence="1">Nucleolus</location>
    </subcellularLocation>
    <subcellularLocation>
        <location evidence="1">Nucleus</location>
        <location evidence="1">Nucleoplasm</location>
    </subcellularLocation>
</comment>
<comment type="similarity">
    <text evidence="1">Belongs to the WD repeat BOP1/ERB1 family.</text>
</comment>
<name>ERB1_ASPCL</name>